<comment type="function">
    <text evidence="1">Receptor that may play a role in the perception of bitterness and is gustducin-linked. May play a role in sensing the chemical composition of the gastrointestinal content. The activity of this receptor may stimulate alpha gustducin, mediate PLC-beta-2 activation and lead to the gating of TRPM5 (By similarity).</text>
</comment>
<comment type="subcellular location">
    <subcellularLocation>
        <location>Membrane</location>
        <topology>Multi-pass membrane protein</topology>
    </subcellularLocation>
</comment>
<comment type="miscellaneous">
    <text>Most taste cells may be activated by a limited number of bitter compounds; individual taste cells can discriminate among bitter stimuli.</text>
</comment>
<comment type="similarity">
    <text evidence="3">Belongs to the G-protein coupled receptor T2R family.</text>
</comment>
<protein>
    <recommendedName>
        <fullName>Taste receptor type 2 member 42</fullName>
        <shortName>T2R42</shortName>
    </recommendedName>
    <alternativeName>
        <fullName>T2R55</fullName>
    </alternativeName>
</protein>
<gene>
    <name type="primary">TAS2R42</name>
    <name type="synonym">TAS2R55</name>
</gene>
<accession>Q645T9</accession>
<name>T2R42_MACMU</name>
<proteinExistence type="inferred from homology"/>
<reference key="1">
    <citation type="journal article" date="2005" name="Mol. Biol. Evol.">
        <title>Evolution of bitter taste receptors in humans and apes.</title>
        <authorList>
            <person name="Fischer A."/>
            <person name="Gilad Y."/>
            <person name="Man O."/>
            <person name="Paeaebo S."/>
        </authorList>
    </citation>
    <scope>NUCLEOTIDE SEQUENCE [GENOMIC DNA]</scope>
</reference>
<feature type="chain" id="PRO_0000082345" description="Taste receptor type 2 member 42">
    <location>
        <begin position="1"/>
        <end position="314"/>
    </location>
</feature>
<feature type="topological domain" description="Extracellular" evidence="2">
    <location>
        <begin position="1"/>
        <end position="7"/>
    </location>
</feature>
<feature type="transmembrane region" description="Helical; Name=1" evidence="2">
    <location>
        <begin position="8"/>
        <end position="28"/>
    </location>
</feature>
<feature type="topological domain" description="Cytoplasmic" evidence="2">
    <location>
        <begin position="29"/>
        <end position="50"/>
    </location>
</feature>
<feature type="transmembrane region" description="Helical; Name=2" evidence="2">
    <location>
        <begin position="51"/>
        <end position="71"/>
    </location>
</feature>
<feature type="topological domain" description="Extracellular" evidence="2">
    <location>
        <begin position="72"/>
        <end position="101"/>
    </location>
</feature>
<feature type="transmembrane region" description="Helical; Name=4" evidence="2">
    <location>
        <begin position="102"/>
        <end position="122"/>
    </location>
</feature>
<feature type="topological domain" description="Cytoplasmic" evidence="2">
    <location>
        <begin position="123"/>
        <end position="127"/>
    </location>
</feature>
<feature type="transmembrane region" description="Helical; Name=3" evidence="2">
    <location>
        <begin position="128"/>
        <end position="148"/>
    </location>
</feature>
<feature type="topological domain" description="Extracellular" evidence="2">
    <location>
        <begin position="149"/>
        <end position="187"/>
    </location>
</feature>
<feature type="transmembrane region" description="Helical; Name=5" evidence="2">
    <location>
        <begin position="188"/>
        <end position="208"/>
    </location>
</feature>
<feature type="topological domain" description="Cytoplasmic" evidence="2">
    <location>
        <begin position="209"/>
        <end position="238"/>
    </location>
</feature>
<feature type="transmembrane region" description="Helical; Name=6" evidence="2">
    <location>
        <begin position="239"/>
        <end position="259"/>
    </location>
</feature>
<feature type="topological domain" description="Extracellular" evidence="2">
    <location>
        <begin position="260"/>
        <end position="265"/>
    </location>
</feature>
<feature type="transmembrane region" description="Helical; Name=7" evidence="2">
    <location>
        <begin position="266"/>
        <end position="286"/>
    </location>
</feature>
<feature type="topological domain" description="Cytoplasmic" evidence="2">
    <location>
        <begin position="287"/>
        <end position="314"/>
    </location>
</feature>
<feature type="glycosylation site" description="N-linked (GlcNAc...) asparagine" evidence="2">
    <location>
        <position position="163"/>
    </location>
</feature>
<organism>
    <name type="scientific">Macaca mulatta</name>
    <name type="common">Rhesus macaque</name>
    <dbReference type="NCBI Taxonomy" id="9544"/>
    <lineage>
        <taxon>Eukaryota</taxon>
        <taxon>Metazoa</taxon>
        <taxon>Chordata</taxon>
        <taxon>Craniata</taxon>
        <taxon>Vertebrata</taxon>
        <taxon>Euteleostomi</taxon>
        <taxon>Mammalia</taxon>
        <taxon>Eutheria</taxon>
        <taxon>Euarchontoglires</taxon>
        <taxon>Primates</taxon>
        <taxon>Haplorrhini</taxon>
        <taxon>Catarrhini</taxon>
        <taxon>Cercopithecidae</taxon>
        <taxon>Cercopithecinae</taxon>
        <taxon>Macaca</taxon>
    </lineage>
</organism>
<keyword id="KW-0297">G-protein coupled receptor</keyword>
<keyword id="KW-0325">Glycoprotein</keyword>
<keyword id="KW-0472">Membrane</keyword>
<keyword id="KW-0675">Receptor</keyword>
<keyword id="KW-1185">Reference proteome</keyword>
<keyword id="KW-0716">Sensory transduction</keyword>
<keyword id="KW-0919">Taste</keyword>
<keyword id="KW-0807">Transducer</keyword>
<keyword id="KW-0812">Transmembrane</keyword>
<keyword id="KW-1133">Transmembrane helix</keyword>
<sequence length="314" mass="36165">MATEMDKIFLTLATVEFIIGMLGNVFIGLVNCSEGIKNQKVFSVDFILTCLAISTIGHLLVILFDSCVVGLAPHLYATDRVRRPVTMLWHMXNHLTTWLATCLSIFYFFKIAHFPHSLFLWLRWRMNRVIAILLTLSLFLLIFDCLVLEMFIDXSLNIIDKSNLTLYLDESKTPYDKLSLLKILLSLNSFIPFSLCLTSLLFLFLSLVRHTRNLKLSSLGSRDSSTEAHRRAMKMVMSLLFLFIVHFFSLQVANWTFCILGNNKYTQFVTLALHAFPSCHSFILILGNSKLRQTAVRLLWHLRNYTKRPNPLPL</sequence>
<dbReference type="EMBL" id="AY724998">
    <property type="protein sequence ID" value="AAU21180.1"/>
    <property type="molecule type" value="Genomic_DNA"/>
</dbReference>
<dbReference type="FunCoup" id="Q645T9">
    <property type="interactions" value="123"/>
</dbReference>
<dbReference type="STRING" id="9544.ENSMMUP00000071431"/>
<dbReference type="GlyCosmos" id="Q645T9">
    <property type="glycosylation" value="1 site, No reported glycans"/>
</dbReference>
<dbReference type="PaxDb" id="9544-ENSMMUP00000011680"/>
<dbReference type="eggNOG" id="ENOG502TCTX">
    <property type="taxonomic scope" value="Eukaryota"/>
</dbReference>
<dbReference type="InParanoid" id="Q645T9"/>
<dbReference type="Proteomes" id="UP000006718">
    <property type="component" value="Unassembled WGS sequence"/>
</dbReference>
<dbReference type="GO" id="GO:0016020">
    <property type="term" value="C:membrane"/>
    <property type="evidence" value="ECO:0000318"/>
    <property type="project" value="GO_Central"/>
</dbReference>
<dbReference type="GO" id="GO:0005886">
    <property type="term" value="C:plasma membrane"/>
    <property type="evidence" value="ECO:0007669"/>
    <property type="project" value="UniProtKB-ARBA"/>
</dbReference>
<dbReference type="GO" id="GO:0033038">
    <property type="term" value="F:bitter taste receptor activity"/>
    <property type="evidence" value="ECO:0007669"/>
    <property type="project" value="InterPro"/>
</dbReference>
<dbReference type="GO" id="GO:0004930">
    <property type="term" value="F:G protein-coupled receptor activity"/>
    <property type="evidence" value="ECO:0007669"/>
    <property type="project" value="UniProtKB-KW"/>
</dbReference>
<dbReference type="CDD" id="cd15024">
    <property type="entry name" value="7tm_TAS2R42"/>
    <property type="match status" value="1"/>
</dbReference>
<dbReference type="FunFam" id="1.20.1070.10:FF:000042">
    <property type="entry name" value="Taste receptor type 2 member 7"/>
    <property type="match status" value="1"/>
</dbReference>
<dbReference type="Gene3D" id="1.20.1070.10">
    <property type="entry name" value="Rhodopsin 7-helix transmembrane proteins"/>
    <property type="match status" value="1"/>
</dbReference>
<dbReference type="InterPro" id="IPR007960">
    <property type="entry name" value="TAS2R"/>
</dbReference>
<dbReference type="PANTHER" id="PTHR11394">
    <property type="entry name" value="TASTE RECEPTOR TYPE 2"/>
    <property type="match status" value="1"/>
</dbReference>
<dbReference type="PANTHER" id="PTHR11394:SF70">
    <property type="entry name" value="TASTE RECEPTOR TYPE 2 MEMBER 42"/>
    <property type="match status" value="1"/>
</dbReference>
<dbReference type="Pfam" id="PF05296">
    <property type="entry name" value="TAS2R"/>
    <property type="match status" value="1"/>
</dbReference>
<dbReference type="SUPFAM" id="SSF81321">
    <property type="entry name" value="Family A G protein-coupled receptor-like"/>
    <property type="match status" value="1"/>
</dbReference>
<evidence type="ECO:0000250" key="1"/>
<evidence type="ECO:0000255" key="2"/>
<evidence type="ECO:0000305" key="3"/>